<reference key="1">
    <citation type="journal article" date="2013" name="Plant Physiol.">
        <title>A Nostoc punctiforme Sugar Transporter Necessary to Establish a Cyanobacterium-Plant Symbiosis.</title>
        <authorList>
            <person name="Ekman M."/>
            <person name="Picossi S."/>
            <person name="Campbell E.L."/>
            <person name="Meeks J.C."/>
            <person name="Flores E."/>
        </authorList>
    </citation>
    <scope>NUCLEOTIDE SEQUENCE [LARGE SCALE GENOMIC DNA]</scope>
    <source>
        <strain>ATCC 29133 / PCC 73102</strain>
    </source>
</reference>
<accession>B2J5B0</accession>
<sequence length="692" mass="76042">MARTIPLEKVRNIGIAAHIDAGKTTTTERILFYSGIIHKIGEVHEGTAVTDWMEQERERGITITAAAISTSWKDHQINIIDTPGHVDFTIEVERSMRVLDGVIAVFCSVGGVQPQSETVWRQAERYKVPRIAFINKMDRTGANFYKVHEQIRDRLRANAIAIQLPIGSENDFQGIVDLVRQRAYIYANDQGTDIQETDIPEELQAQVDEFRTKLIEAAAETDDALMAKYFEGEELTEQEIRTALRKGTIAGTIVPVLCGSAFKNKGVQLMLDAVVDYLPAPSEVPPIQGLLPNGDTIERRADDNEPLAALAFKIMADPYGRLTFVRVYSGVLKKGSYVLNASKNKKERISRLVLMKADDRQDVDELRAGDLGAALGLKDTLTGDTLCDDGSPVILESLFIPEPVISVAVEPKTKNDMDKLSKALQSLSEEDPTFRVRVDPETNQTVIAGMGELHLEILVDRMLREFKVEANVGAPQVAYRETIRKAVNKVEGKFIRQSGGKGQYGHVVINLEPGEPGTGFEFVSKIAGGTVPKEYVGPAEQGMKESCESGVLAGYPLIDVKATLIDGSYHDVDSSEMAFKIAGSMAMKEAVLKASPVILEPMMKVEVEVPEDYMGNVIGDLNTRRGQIESQSTEKGLAKVTSKVPLASMFGYATDIRSKTQGRGTFTMEFSHYEEVPRSVAETIIAKSKGNA</sequence>
<name>EFG_NOSP7</name>
<feature type="chain" id="PRO_1000091741" description="Elongation factor G">
    <location>
        <begin position="1"/>
        <end position="692"/>
    </location>
</feature>
<feature type="domain" description="tr-type G">
    <location>
        <begin position="8"/>
        <end position="282"/>
    </location>
</feature>
<feature type="binding site" evidence="1">
    <location>
        <begin position="17"/>
        <end position="24"/>
    </location>
    <ligand>
        <name>GTP</name>
        <dbReference type="ChEBI" id="CHEBI:37565"/>
    </ligand>
</feature>
<feature type="binding site" evidence="1">
    <location>
        <begin position="81"/>
        <end position="85"/>
    </location>
    <ligand>
        <name>GTP</name>
        <dbReference type="ChEBI" id="CHEBI:37565"/>
    </ligand>
</feature>
<feature type="binding site" evidence="1">
    <location>
        <begin position="135"/>
        <end position="138"/>
    </location>
    <ligand>
        <name>GTP</name>
        <dbReference type="ChEBI" id="CHEBI:37565"/>
    </ligand>
</feature>
<proteinExistence type="inferred from homology"/>
<protein>
    <recommendedName>
        <fullName evidence="1">Elongation factor G</fullName>
        <shortName evidence="1">EF-G</shortName>
    </recommendedName>
</protein>
<evidence type="ECO:0000255" key="1">
    <source>
        <dbReference type="HAMAP-Rule" id="MF_00054"/>
    </source>
</evidence>
<gene>
    <name evidence="1" type="primary">fusA</name>
    <name type="ordered locus">Npun_F3883</name>
</gene>
<organism>
    <name type="scientific">Nostoc punctiforme (strain ATCC 29133 / PCC 73102)</name>
    <dbReference type="NCBI Taxonomy" id="63737"/>
    <lineage>
        <taxon>Bacteria</taxon>
        <taxon>Bacillati</taxon>
        <taxon>Cyanobacteriota</taxon>
        <taxon>Cyanophyceae</taxon>
        <taxon>Nostocales</taxon>
        <taxon>Nostocaceae</taxon>
        <taxon>Nostoc</taxon>
    </lineage>
</organism>
<dbReference type="EMBL" id="CP001037">
    <property type="protein sequence ID" value="ACC82267.1"/>
    <property type="molecule type" value="Genomic_DNA"/>
</dbReference>
<dbReference type="RefSeq" id="WP_012410238.1">
    <property type="nucleotide sequence ID" value="NC_010628.1"/>
</dbReference>
<dbReference type="SMR" id="B2J5B0"/>
<dbReference type="STRING" id="63737.Npun_F3883"/>
<dbReference type="EnsemblBacteria" id="ACC82267">
    <property type="protein sequence ID" value="ACC82267"/>
    <property type="gene ID" value="Npun_F3883"/>
</dbReference>
<dbReference type="KEGG" id="npu:Npun_F3883"/>
<dbReference type="eggNOG" id="COG0480">
    <property type="taxonomic scope" value="Bacteria"/>
</dbReference>
<dbReference type="HOGENOM" id="CLU_002794_4_1_3"/>
<dbReference type="OrthoDB" id="580826at2"/>
<dbReference type="PhylomeDB" id="B2J5B0"/>
<dbReference type="Proteomes" id="UP000001191">
    <property type="component" value="Chromosome"/>
</dbReference>
<dbReference type="GO" id="GO:0005737">
    <property type="term" value="C:cytoplasm"/>
    <property type="evidence" value="ECO:0007669"/>
    <property type="project" value="UniProtKB-SubCell"/>
</dbReference>
<dbReference type="GO" id="GO:0005525">
    <property type="term" value="F:GTP binding"/>
    <property type="evidence" value="ECO:0007669"/>
    <property type="project" value="UniProtKB-UniRule"/>
</dbReference>
<dbReference type="GO" id="GO:0003924">
    <property type="term" value="F:GTPase activity"/>
    <property type="evidence" value="ECO:0007669"/>
    <property type="project" value="InterPro"/>
</dbReference>
<dbReference type="GO" id="GO:0003746">
    <property type="term" value="F:translation elongation factor activity"/>
    <property type="evidence" value="ECO:0007669"/>
    <property type="project" value="UniProtKB-UniRule"/>
</dbReference>
<dbReference type="GO" id="GO:0032790">
    <property type="term" value="P:ribosome disassembly"/>
    <property type="evidence" value="ECO:0007669"/>
    <property type="project" value="TreeGrafter"/>
</dbReference>
<dbReference type="CDD" id="cd01886">
    <property type="entry name" value="EF-G"/>
    <property type="match status" value="1"/>
</dbReference>
<dbReference type="CDD" id="cd16262">
    <property type="entry name" value="EFG_III"/>
    <property type="match status" value="1"/>
</dbReference>
<dbReference type="CDD" id="cd01434">
    <property type="entry name" value="EFG_mtEFG1_IV"/>
    <property type="match status" value="1"/>
</dbReference>
<dbReference type="CDD" id="cd03713">
    <property type="entry name" value="EFG_mtEFG_C"/>
    <property type="match status" value="1"/>
</dbReference>
<dbReference type="CDD" id="cd04088">
    <property type="entry name" value="EFG_mtEFG_II"/>
    <property type="match status" value="1"/>
</dbReference>
<dbReference type="FunFam" id="2.40.30.10:FF:000006">
    <property type="entry name" value="Elongation factor G"/>
    <property type="match status" value="1"/>
</dbReference>
<dbReference type="FunFam" id="3.30.230.10:FF:000003">
    <property type="entry name" value="Elongation factor G"/>
    <property type="match status" value="1"/>
</dbReference>
<dbReference type="FunFam" id="3.30.70.240:FF:000001">
    <property type="entry name" value="Elongation factor G"/>
    <property type="match status" value="1"/>
</dbReference>
<dbReference type="FunFam" id="3.30.70.870:FF:000001">
    <property type="entry name" value="Elongation factor G"/>
    <property type="match status" value="1"/>
</dbReference>
<dbReference type="FunFam" id="3.40.50.300:FF:000029">
    <property type="entry name" value="Elongation factor G"/>
    <property type="match status" value="1"/>
</dbReference>
<dbReference type="Gene3D" id="3.30.230.10">
    <property type="match status" value="1"/>
</dbReference>
<dbReference type="Gene3D" id="3.30.70.240">
    <property type="match status" value="1"/>
</dbReference>
<dbReference type="Gene3D" id="3.30.70.870">
    <property type="entry name" value="Elongation Factor G (Translational Gtpase), domain 3"/>
    <property type="match status" value="1"/>
</dbReference>
<dbReference type="Gene3D" id="3.40.50.300">
    <property type="entry name" value="P-loop containing nucleotide triphosphate hydrolases"/>
    <property type="match status" value="1"/>
</dbReference>
<dbReference type="Gene3D" id="2.40.30.10">
    <property type="entry name" value="Translation factors"/>
    <property type="match status" value="1"/>
</dbReference>
<dbReference type="HAMAP" id="MF_00054_B">
    <property type="entry name" value="EF_G_EF_2_B"/>
    <property type="match status" value="1"/>
</dbReference>
<dbReference type="InterPro" id="IPR041095">
    <property type="entry name" value="EFG_II"/>
</dbReference>
<dbReference type="InterPro" id="IPR009022">
    <property type="entry name" value="EFG_III"/>
</dbReference>
<dbReference type="InterPro" id="IPR035647">
    <property type="entry name" value="EFG_III/V"/>
</dbReference>
<dbReference type="InterPro" id="IPR047872">
    <property type="entry name" value="EFG_IV"/>
</dbReference>
<dbReference type="InterPro" id="IPR035649">
    <property type="entry name" value="EFG_V"/>
</dbReference>
<dbReference type="InterPro" id="IPR000640">
    <property type="entry name" value="EFG_V-like"/>
</dbReference>
<dbReference type="InterPro" id="IPR004161">
    <property type="entry name" value="EFTu-like_2"/>
</dbReference>
<dbReference type="InterPro" id="IPR031157">
    <property type="entry name" value="G_TR_CS"/>
</dbReference>
<dbReference type="InterPro" id="IPR027417">
    <property type="entry name" value="P-loop_NTPase"/>
</dbReference>
<dbReference type="InterPro" id="IPR020568">
    <property type="entry name" value="Ribosomal_Su5_D2-typ_SF"/>
</dbReference>
<dbReference type="InterPro" id="IPR014721">
    <property type="entry name" value="Ribsml_uS5_D2-typ_fold_subgr"/>
</dbReference>
<dbReference type="InterPro" id="IPR005225">
    <property type="entry name" value="Small_GTP-bd"/>
</dbReference>
<dbReference type="InterPro" id="IPR000795">
    <property type="entry name" value="T_Tr_GTP-bd_dom"/>
</dbReference>
<dbReference type="InterPro" id="IPR009000">
    <property type="entry name" value="Transl_B-barrel_sf"/>
</dbReference>
<dbReference type="InterPro" id="IPR004540">
    <property type="entry name" value="Transl_elong_EFG/EF2"/>
</dbReference>
<dbReference type="InterPro" id="IPR005517">
    <property type="entry name" value="Transl_elong_EFG/EF2_IV"/>
</dbReference>
<dbReference type="NCBIfam" id="TIGR00484">
    <property type="entry name" value="EF-G"/>
    <property type="match status" value="1"/>
</dbReference>
<dbReference type="NCBIfam" id="NF009379">
    <property type="entry name" value="PRK12740.1-3"/>
    <property type="match status" value="1"/>
</dbReference>
<dbReference type="NCBIfam" id="NF009381">
    <property type="entry name" value="PRK12740.1-5"/>
    <property type="match status" value="1"/>
</dbReference>
<dbReference type="NCBIfam" id="TIGR00231">
    <property type="entry name" value="small_GTP"/>
    <property type="match status" value="1"/>
</dbReference>
<dbReference type="PANTHER" id="PTHR43261:SF1">
    <property type="entry name" value="RIBOSOME-RELEASING FACTOR 2, MITOCHONDRIAL"/>
    <property type="match status" value="1"/>
</dbReference>
<dbReference type="PANTHER" id="PTHR43261">
    <property type="entry name" value="TRANSLATION ELONGATION FACTOR G-RELATED"/>
    <property type="match status" value="1"/>
</dbReference>
<dbReference type="Pfam" id="PF00679">
    <property type="entry name" value="EFG_C"/>
    <property type="match status" value="1"/>
</dbReference>
<dbReference type="Pfam" id="PF14492">
    <property type="entry name" value="EFG_III"/>
    <property type="match status" value="1"/>
</dbReference>
<dbReference type="Pfam" id="PF03764">
    <property type="entry name" value="EFG_IV"/>
    <property type="match status" value="1"/>
</dbReference>
<dbReference type="Pfam" id="PF00009">
    <property type="entry name" value="GTP_EFTU"/>
    <property type="match status" value="1"/>
</dbReference>
<dbReference type="Pfam" id="PF03144">
    <property type="entry name" value="GTP_EFTU_D2"/>
    <property type="match status" value="1"/>
</dbReference>
<dbReference type="PRINTS" id="PR00315">
    <property type="entry name" value="ELONGATNFCT"/>
</dbReference>
<dbReference type="SMART" id="SM00838">
    <property type="entry name" value="EFG_C"/>
    <property type="match status" value="1"/>
</dbReference>
<dbReference type="SMART" id="SM00889">
    <property type="entry name" value="EFG_IV"/>
    <property type="match status" value="1"/>
</dbReference>
<dbReference type="SUPFAM" id="SSF54980">
    <property type="entry name" value="EF-G C-terminal domain-like"/>
    <property type="match status" value="2"/>
</dbReference>
<dbReference type="SUPFAM" id="SSF52540">
    <property type="entry name" value="P-loop containing nucleoside triphosphate hydrolases"/>
    <property type="match status" value="1"/>
</dbReference>
<dbReference type="SUPFAM" id="SSF54211">
    <property type="entry name" value="Ribosomal protein S5 domain 2-like"/>
    <property type="match status" value="1"/>
</dbReference>
<dbReference type="SUPFAM" id="SSF50447">
    <property type="entry name" value="Translation proteins"/>
    <property type="match status" value="1"/>
</dbReference>
<dbReference type="PROSITE" id="PS00301">
    <property type="entry name" value="G_TR_1"/>
    <property type="match status" value="1"/>
</dbReference>
<dbReference type="PROSITE" id="PS51722">
    <property type="entry name" value="G_TR_2"/>
    <property type="match status" value="1"/>
</dbReference>
<keyword id="KW-0963">Cytoplasm</keyword>
<keyword id="KW-0251">Elongation factor</keyword>
<keyword id="KW-0342">GTP-binding</keyword>
<keyword id="KW-0547">Nucleotide-binding</keyword>
<keyword id="KW-0648">Protein biosynthesis</keyword>
<keyword id="KW-1185">Reference proteome</keyword>
<comment type="function">
    <text evidence="1">Catalyzes the GTP-dependent ribosomal translocation step during translation elongation. During this step, the ribosome changes from the pre-translocational (PRE) to the post-translocational (POST) state as the newly formed A-site-bound peptidyl-tRNA and P-site-bound deacylated tRNA move to the P and E sites, respectively. Catalyzes the coordinated movement of the two tRNA molecules, the mRNA and conformational changes in the ribosome.</text>
</comment>
<comment type="subcellular location">
    <subcellularLocation>
        <location evidence="1">Cytoplasm</location>
    </subcellularLocation>
</comment>
<comment type="similarity">
    <text evidence="1">Belongs to the TRAFAC class translation factor GTPase superfamily. Classic translation factor GTPase family. EF-G/EF-2 subfamily.</text>
</comment>